<reference key="1">
    <citation type="submission" date="2004-06" db="EMBL/GenBank/DDBJ databases">
        <authorList>
            <consortium name="NIH - Xenopus Gene Collection (XGC) project"/>
        </authorList>
    </citation>
    <scope>NUCLEOTIDE SEQUENCE [LARGE SCALE MRNA]</scope>
    <source>
        <tissue>Embryo</tissue>
    </source>
</reference>
<protein>
    <recommendedName>
        <fullName>ER degradation-enhancing alpha-mannosidase-like protein 3</fullName>
        <ecNumber evidence="3">3.2.1.113</ecNumber>
    </recommendedName>
    <alternativeName>
        <fullName>Alpha-1,2-mannosidase EDEM3</fullName>
    </alternativeName>
</protein>
<comment type="function">
    <text evidence="1">May be involved in endoplasmic reticulum-associated degradation (ERAD).</text>
</comment>
<comment type="catalytic activity">
    <reaction evidence="3">
        <text>N(4)-(alpha-D-Man-(1-&gt;2)-alpha-D-Man-(1-&gt;2)-alpha-D-Man-(1-&gt;3)-[alpha-D-Man-(1-&gt;2)-alpha-D-Man-(1-&gt;3)-[alpha-D-Man-(1-&gt;2)-alpha-D-Man-(1-&gt;6)]-alpha-D-Man-(1-&gt;6)]-beta-D-Man-(1-&gt;4)-beta-D-GlcNAc-(1-&gt;4)-beta-D-GlcNAc)-L-asparaginyl-[protein] (N-glucan mannose isomer 9A1,2,3B1,2,3) + 4 H2O = N(4)-(alpha-D-Man-(1-&gt;3)-[alpha-D-Man-(1-&gt;3)-[alpha-D-Man-(1-&gt;6)]-alpha-D-Man-(1-&gt;6)]-beta-D-Man-(1-&gt;4)-beta-D-GlcNAc-(1-&gt;4)-beta-D-GlcNAc)-L-asparaginyl-[protein] (N-glucan mannose isomer 5A1,2) + 4 beta-D-mannose</text>
        <dbReference type="Rhea" id="RHEA:56008"/>
        <dbReference type="Rhea" id="RHEA-COMP:14356"/>
        <dbReference type="Rhea" id="RHEA-COMP:14367"/>
        <dbReference type="ChEBI" id="CHEBI:15377"/>
        <dbReference type="ChEBI" id="CHEBI:28563"/>
        <dbReference type="ChEBI" id="CHEBI:59087"/>
        <dbReference type="ChEBI" id="CHEBI:139493"/>
        <dbReference type="EC" id="3.2.1.113"/>
    </reaction>
</comment>
<comment type="catalytic activity">
    <reaction evidence="3">
        <text>N(4)-(alpha-D-Man-(1-&gt;2)-alpha-D-Man-(1-&gt;2)-alpha-D-Man-(1-&gt;3)-[alpha-D-Man-(1-&gt;3)-[alpha-D-Man-(1-&gt;2)-alpha-D-Man-(1-&gt;6)]-alpha-D-Man-(1-&gt;6)]-beta-D-Man-(1-&gt;4)-beta-D-GlcNAc-(1-&gt;4)-beta-D-GlcNAc)-L-asparaginyl-[protein] (N-glucan mannose isomer 8A1,2,3B1,3) + 3 H2O = N(4)-(alpha-D-Man-(1-&gt;3)-[alpha-D-Man-(1-&gt;3)-[alpha-D-Man-(1-&gt;6)]-alpha-D-Man-(1-&gt;6)]-beta-D-Man-(1-&gt;4)-beta-D-GlcNAc-(1-&gt;4)-beta-D-GlcNAc)-L-asparaginyl-[protein] (N-glucan mannose isomer 5A1,2) + 3 beta-D-mannose</text>
        <dbReference type="Rhea" id="RHEA:56028"/>
        <dbReference type="Rhea" id="RHEA-COMP:14358"/>
        <dbReference type="Rhea" id="RHEA-COMP:14367"/>
        <dbReference type="ChEBI" id="CHEBI:15377"/>
        <dbReference type="ChEBI" id="CHEBI:28563"/>
        <dbReference type="ChEBI" id="CHEBI:59087"/>
        <dbReference type="ChEBI" id="CHEBI:60628"/>
        <dbReference type="EC" id="3.2.1.113"/>
    </reaction>
</comment>
<comment type="cofactor">
    <cofactor evidence="4">
        <name>Ca(2+)</name>
        <dbReference type="ChEBI" id="CHEBI:29108"/>
    </cofactor>
</comment>
<comment type="pathway">
    <text evidence="3">Protein modification; protein glycosylation.</text>
</comment>
<comment type="subcellular location">
    <subcellularLocation>
        <location evidence="6">Endoplasmic reticulum lumen</location>
    </subcellularLocation>
</comment>
<comment type="domain">
    <text evidence="1">Contains a protease-associated domain (PA) of unknown function.</text>
</comment>
<comment type="similarity">
    <text evidence="8">Belongs to the glycosyl hydrolase 47 family.</text>
</comment>
<comment type="sequence caution" evidence="8">
    <conflict type="erroneous initiation">
        <sequence resource="EMBL-CDS" id="AAH72826"/>
    </conflict>
</comment>
<gene>
    <name type="primary">edem3</name>
</gene>
<accession>Q6GQB9</accession>
<proteinExistence type="evidence at transcript level"/>
<keyword id="KW-0256">Endoplasmic reticulum</keyword>
<keyword id="KW-0325">Glycoprotein</keyword>
<keyword id="KW-0378">Hydrolase</keyword>
<keyword id="KW-0479">Metal-binding</keyword>
<keyword id="KW-1185">Reference proteome</keyword>
<keyword id="KW-0732">Signal</keyword>
<keyword id="KW-0834">Unfolded protein response</keyword>
<name>EDEM3_XENLA</name>
<sequence length="913" mass="102735">MGCPAVEARRWGDMWLVVAFCLLGHGHAAVTKEEKAHLRSQVLEMFDHAYGNYMQHAYPADELMPLTCRGRIRGQEPSRGDVDDALGKFSLTLIDTLDTLVVLNKTKEFEDAVRKVITDVNLDNDIVVSVFETNIRVLGGLLGGHSVAIMLKENGDGMQWYNDELLHMAKELGYKLLPAFNTTSGLPYPRINLKFGIRRPEARTGTETDTCTACAGTMILEFAALSRFTGISVFEEHARKALDFLWDKRQRSSNLVGVTINIHTGDWVRKDSGVGAGIDSYYEYLLKAYVLLGDDSYLERFNTHYDAIMRYISQPPLLLDVHIHKPMLTARTWMDSLLAFFPGLQVLKGDIRPAIETHEMLYQVIKKHNFLPEAFTTDFRVHWAQHPLRPEFAESTYFLYKATGDPYYLEVGKTLIDNLNKYARVPCGFAAVKDVRTGSHEDRMDSFFLAEMFKYLYLLFSEREDLIFDIEDYIFTTEAHLLPLSLSTANPSSTKKNTTTQYTELDDSNFDWSCPNTQILFRNDPMYAQNIREPLKNVVDKNCPRSPSRLDEISGSGKMPPLRARDFMASNSEHLEILKKMGVSLIHLKDGRVQLVQHANQAASSIDAEDGLRFMQEMIELSSQQQKEQQLPPRAVQIVSHPFYGRVVLTAGPAQFGMDLSKHLAGAQGLVARAEPYSGCSDITNGQAIQGKIALMQRGQCMFAEKARNVQKAGAIGGIVIDDNEGSSSDTAPLFQMAGDGKSTDDVTIPMLFLFSKEGNIILDAIREYQQVEVLLSDKAKDRDLESESGEQKPVENDSQKQALEDLFMTPEEIAELLIVHEEESPVSQPEVPSSDSPSGGDRTSERDITPESQEHKTEETEHSPKDNVQTPPENSEDSTEEKMDNKVQPMESILADWKEDIEAFEMMEKDEL</sequence>
<organism>
    <name type="scientific">Xenopus laevis</name>
    <name type="common">African clawed frog</name>
    <dbReference type="NCBI Taxonomy" id="8355"/>
    <lineage>
        <taxon>Eukaryota</taxon>
        <taxon>Metazoa</taxon>
        <taxon>Chordata</taxon>
        <taxon>Craniata</taxon>
        <taxon>Vertebrata</taxon>
        <taxon>Euteleostomi</taxon>
        <taxon>Amphibia</taxon>
        <taxon>Batrachia</taxon>
        <taxon>Anura</taxon>
        <taxon>Pipoidea</taxon>
        <taxon>Pipidae</taxon>
        <taxon>Xenopodinae</taxon>
        <taxon>Xenopus</taxon>
        <taxon>Xenopus</taxon>
    </lineage>
</organism>
<evidence type="ECO:0000250" key="1"/>
<evidence type="ECO:0000250" key="2">
    <source>
        <dbReference type="UniProtKB" id="P31723"/>
    </source>
</evidence>
<evidence type="ECO:0000250" key="3">
    <source>
        <dbReference type="UniProtKB" id="P32906"/>
    </source>
</evidence>
<evidence type="ECO:0000250" key="4">
    <source>
        <dbReference type="UniProtKB" id="P45700"/>
    </source>
</evidence>
<evidence type="ECO:0000255" key="5"/>
<evidence type="ECO:0000255" key="6">
    <source>
        <dbReference type="PROSITE-ProRule" id="PRU10138"/>
    </source>
</evidence>
<evidence type="ECO:0000256" key="7">
    <source>
        <dbReference type="SAM" id="MobiDB-lite"/>
    </source>
</evidence>
<evidence type="ECO:0000305" key="8"/>
<feature type="signal peptide" evidence="5">
    <location>
        <begin position="1"/>
        <end position="15"/>
    </location>
</feature>
<feature type="chain" id="PRO_0000364227" description="ER degradation-enhancing alpha-mannosidase-like protein 3">
    <location>
        <begin position="16"/>
        <end position="913"/>
    </location>
</feature>
<feature type="domain" description="PA">
    <location>
        <begin position="660"/>
        <end position="766"/>
    </location>
</feature>
<feature type="region of interest" description="Disordered" evidence="7">
    <location>
        <begin position="823"/>
        <end position="895"/>
    </location>
</feature>
<feature type="short sequence motif" description="Prevents secretion from ER" evidence="6">
    <location>
        <begin position="910"/>
        <end position="913"/>
    </location>
</feature>
<feature type="compositionally biased region" description="Low complexity" evidence="7">
    <location>
        <begin position="826"/>
        <end position="839"/>
    </location>
</feature>
<feature type="compositionally biased region" description="Basic and acidic residues" evidence="7">
    <location>
        <begin position="843"/>
        <end position="866"/>
    </location>
</feature>
<feature type="active site" description="Proton donor" evidence="1">
    <location>
        <position position="132"/>
    </location>
</feature>
<feature type="active site" evidence="1">
    <location>
        <position position="279"/>
    </location>
</feature>
<feature type="active site" description="Proton donor" evidence="2">
    <location>
        <position position="373"/>
    </location>
</feature>
<feature type="active site" evidence="1">
    <location>
        <position position="391"/>
    </location>
</feature>
<feature type="binding site" evidence="3">
    <location>
        <position position="477"/>
    </location>
    <ligand>
        <name>Ca(2+)</name>
        <dbReference type="ChEBI" id="CHEBI:29108"/>
    </ligand>
</feature>
<feature type="glycosylation site" description="N-linked (GlcNAc...) asparagine" evidence="5">
    <location>
        <position position="104"/>
    </location>
</feature>
<feature type="glycosylation site" description="N-linked (GlcNAc...) asparagine" evidence="5">
    <location>
        <position position="181"/>
    </location>
</feature>
<feature type="glycosylation site" description="N-linked (GlcNAc...) asparagine" evidence="5">
    <location>
        <position position="497"/>
    </location>
</feature>
<feature type="glycosylation site" description="N-linked (GlcNAc...) asparagine" evidence="5">
    <location>
        <position position="797"/>
    </location>
</feature>
<dbReference type="EC" id="3.2.1.113" evidence="3"/>
<dbReference type="EMBL" id="BC072826">
    <property type="protein sequence ID" value="AAH72826.1"/>
    <property type="status" value="ALT_INIT"/>
    <property type="molecule type" value="mRNA"/>
</dbReference>
<dbReference type="RefSeq" id="NP_001085481.2">
    <property type="nucleotide sequence ID" value="NM_001092012.1"/>
</dbReference>
<dbReference type="SMR" id="Q6GQB9"/>
<dbReference type="CAZy" id="GH47">
    <property type="family name" value="Glycoside Hydrolase Family 47"/>
</dbReference>
<dbReference type="GlyCosmos" id="Q6GQB9">
    <property type="glycosylation" value="4 sites, No reported glycans"/>
</dbReference>
<dbReference type="DNASU" id="443907"/>
<dbReference type="GeneID" id="443907"/>
<dbReference type="KEGG" id="xla:443907"/>
<dbReference type="AGR" id="Xenbase:XB-GENE-5811512"/>
<dbReference type="CTD" id="443907"/>
<dbReference type="Xenbase" id="XB-GENE-5811512">
    <property type="gene designation" value="edem3.L"/>
</dbReference>
<dbReference type="OrthoDB" id="8118055at2759"/>
<dbReference type="UniPathway" id="UPA00378"/>
<dbReference type="Proteomes" id="UP000186698">
    <property type="component" value="Chromosome 4L"/>
</dbReference>
<dbReference type="Bgee" id="443907">
    <property type="expression patterns" value="Expressed in egg cell and 19 other cell types or tissues"/>
</dbReference>
<dbReference type="GO" id="GO:0005783">
    <property type="term" value="C:endoplasmic reticulum"/>
    <property type="evidence" value="ECO:0000318"/>
    <property type="project" value="GO_Central"/>
</dbReference>
<dbReference type="GO" id="GO:0005788">
    <property type="term" value="C:endoplasmic reticulum lumen"/>
    <property type="evidence" value="ECO:0007669"/>
    <property type="project" value="UniProtKB-SubCell"/>
</dbReference>
<dbReference type="GO" id="GO:0044322">
    <property type="term" value="C:endoplasmic reticulum quality control compartment"/>
    <property type="evidence" value="ECO:0007669"/>
    <property type="project" value="GOC"/>
</dbReference>
<dbReference type="GO" id="GO:0016020">
    <property type="term" value="C:membrane"/>
    <property type="evidence" value="ECO:0007669"/>
    <property type="project" value="InterPro"/>
</dbReference>
<dbReference type="GO" id="GO:0005509">
    <property type="term" value="F:calcium ion binding"/>
    <property type="evidence" value="ECO:0007669"/>
    <property type="project" value="InterPro"/>
</dbReference>
<dbReference type="GO" id="GO:0004571">
    <property type="term" value="F:mannosyl-oligosaccharide 1,2-alpha-mannosidase activity"/>
    <property type="evidence" value="ECO:0000318"/>
    <property type="project" value="GO_Central"/>
</dbReference>
<dbReference type="GO" id="GO:0005975">
    <property type="term" value="P:carbohydrate metabolic process"/>
    <property type="evidence" value="ECO:0007669"/>
    <property type="project" value="InterPro"/>
</dbReference>
<dbReference type="GO" id="GO:1904380">
    <property type="term" value="P:endoplasmic reticulum mannose trimming"/>
    <property type="evidence" value="ECO:0007669"/>
    <property type="project" value="InterPro"/>
</dbReference>
<dbReference type="GO" id="GO:0030968">
    <property type="term" value="P:endoplasmic reticulum unfolded protein response"/>
    <property type="evidence" value="ECO:0000318"/>
    <property type="project" value="GO_Central"/>
</dbReference>
<dbReference type="GO" id="GO:0006058">
    <property type="term" value="P:mannoprotein catabolic process"/>
    <property type="evidence" value="ECO:0000318"/>
    <property type="project" value="GO_Central"/>
</dbReference>
<dbReference type="GO" id="GO:0006486">
    <property type="term" value="P:protein glycosylation"/>
    <property type="evidence" value="ECO:0007669"/>
    <property type="project" value="UniProtKB-UniPathway"/>
</dbReference>
<dbReference type="GO" id="GO:0097466">
    <property type="term" value="P:ubiquitin-dependent glycoprotein ERAD pathway"/>
    <property type="evidence" value="ECO:0000318"/>
    <property type="project" value="GO_Central"/>
</dbReference>
<dbReference type="CDD" id="cd02126">
    <property type="entry name" value="PA_EDEM3_like"/>
    <property type="match status" value="1"/>
</dbReference>
<dbReference type="FunFam" id="1.50.10.10:FF:000008">
    <property type="entry name" value="alpha-1,2-Mannosidase"/>
    <property type="match status" value="1"/>
</dbReference>
<dbReference type="Gene3D" id="1.50.10.10">
    <property type="match status" value="1"/>
</dbReference>
<dbReference type="Gene3D" id="3.50.30.30">
    <property type="match status" value="1"/>
</dbReference>
<dbReference type="InterPro" id="IPR012341">
    <property type="entry name" value="6hp_glycosidase-like_sf"/>
</dbReference>
<dbReference type="InterPro" id="IPR044674">
    <property type="entry name" value="EDEM1/2/3"/>
</dbReference>
<dbReference type="InterPro" id="IPR037322">
    <property type="entry name" value="EDEM3_PA"/>
</dbReference>
<dbReference type="InterPro" id="IPR001382">
    <property type="entry name" value="Glyco_hydro_47"/>
</dbReference>
<dbReference type="InterPro" id="IPR046450">
    <property type="entry name" value="PA_dom_sf"/>
</dbReference>
<dbReference type="InterPro" id="IPR003137">
    <property type="entry name" value="PA_domain"/>
</dbReference>
<dbReference type="InterPro" id="IPR036026">
    <property type="entry name" value="Seven-hairpin_glycosidases"/>
</dbReference>
<dbReference type="PANTHER" id="PTHR45679">
    <property type="entry name" value="ER DEGRADATION-ENHANCING ALPHA-MANNOSIDASE-LIKE PROTEIN 2"/>
    <property type="match status" value="1"/>
</dbReference>
<dbReference type="PANTHER" id="PTHR45679:SF2">
    <property type="entry name" value="ER DEGRADATION-ENHANCING ALPHA-MANNOSIDASE-LIKE PROTEIN 3"/>
    <property type="match status" value="1"/>
</dbReference>
<dbReference type="Pfam" id="PF01532">
    <property type="entry name" value="Glyco_hydro_47"/>
    <property type="match status" value="1"/>
</dbReference>
<dbReference type="Pfam" id="PF02225">
    <property type="entry name" value="PA"/>
    <property type="match status" value="1"/>
</dbReference>
<dbReference type="PRINTS" id="PR00747">
    <property type="entry name" value="GLYHDRLASE47"/>
</dbReference>
<dbReference type="SUPFAM" id="SSF52025">
    <property type="entry name" value="PA domain"/>
    <property type="match status" value="1"/>
</dbReference>
<dbReference type="SUPFAM" id="SSF48225">
    <property type="entry name" value="Seven-hairpin glycosidases"/>
    <property type="match status" value="1"/>
</dbReference>
<dbReference type="PROSITE" id="PS00014">
    <property type="entry name" value="ER_TARGET"/>
    <property type="match status" value="1"/>
</dbReference>